<name>RTEL1_MOUSE</name>
<proteinExistence type="evidence at protein level"/>
<organism>
    <name type="scientific">Mus musculus</name>
    <name type="common">Mouse</name>
    <dbReference type="NCBI Taxonomy" id="10090"/>
    <lineage>
        <taxon>Eukaryota</taxon>
        <taxon>Metazoa</taxon>
        <taxon>Chordata</taxon>
        <taxon>Craniata</taxon>
        <taxon>Vertebrata</taxon>
        <taxon>Euteleostomi</taxon>
        <taxon>Mammalia</taxon>
        <taxon>Eutheria</taxon>
        <taxon>Euarchontoglires</taxon>
        <taxon>Glires</taxon>
        <taxon>Rodentia</taxon>
        <taxon>Myomorpha</taxon>
        <taxon>Muroidea</taxon>
        <taxon>Muridae</taxon>
        <taxon>Murinae</taxon>
        <taxon>Mus</taxon>
        <taxon>Mus</taxon>
    </lineage>
</organism>
<reference key="1">
    <citation type="journal article" date="2004" name="Cell">
        <title>Regulation of murine telomere length by Rtel: an essential gene encoding a helicase-like protein.</title>
        <authorList>
            <person name="Ding H."/>
            <person name="Schertzer M."/>
            <person name="Wu X."/>
            <person name="Gertsenstein M."/>
            <person name="Selig S."/>
            <person name="Kammori M."/>
            <person name="Pourvali R."/>
            <person name="Poon S."/>
            <person name="Vulto I."/>
            <person name="Chavez E."/>
            <person name="Tam P.P.L."/>
            <person name="Nagy A."/>
            <person name="Lansdorp P.M."/>
        </authorList>
    </citation>
    <scope>NUCLEOTIDE SEQUENCE [MRNA] (ISOFORMS 1; 2; 3; 4 AND 5)</scope>
    <scope>FUNCTION</scope>
    <scope>SUBCELLULAR LOCATION</scope>
    <scope>TISSUE SPECIFICITY</scope>
    <scope>DISRUPTION PHENOTYPE</scope>
    <source>
        <strain>BALB/cJ</strain>
        <tissue>Testis</tissue>
    </source>
</reference>
<reference key="2">
    <citation type="journal article" date="2004" name="DNA Res.">
        <title>Prediction of the coding sequences of mouse homologues of KIAA gene: IV. The complete nucleotide sequences of 500 mouse KIAA-homologous cDNAs identified by screening of terminal sequences of cDNA clones randomly sampled from size-fractionated libraries.</title>
        <authorList>
            <person name="Okazaki N."/>
            <person name="Kikuno R."/>
            <person name="Ohara R."/>
            <person name="Inamoto S."/>
            <person name="Koseki H."/>
            <person name="Hiraoka S."/>
            <person name="Saga Y."/>
            <person name="Seino S."/>
            <person name="Nishimura M."/>
            <person name="Kaisho T."/>
            <person name="Hoshino K."/>
            <person name="Kitamura H."/>
            <person name="Nagase T."/>
            <person name="Ohara O."/>
            <person name="Koga H."/>
        </authorList>
    </citation>
    <scope>NUCLEOTIDE SEQUENCE [LARGE SCALE MRNA] (ISOFORM 2)</scope>
    <source>
        <tissue>Fetal brain</tissue>
    </source>
</reference>
<reference key="3">
    <citation type="journal article" date="2005" name="Science">
        <title>The transcriptional landscape of the mammalian genome.</title>
        <authorList>
            <person name="Carninci P."/>
            <person name="Kasukawa T."/>
            <person name="Katayama S."/>
            <person name="Gough J."/>
            <person name="Frith M.C."/>
            <person name="Maeda N."/>
            <person name="Oyama R."/>
            <person name="Ravasi T."/>
            <person name="Lenhard B."/>
            <person name="Wells C."/>
            <person name="Kodzius R."/>
            <person name="Shimokawa K."/>
            <person name="Bajic V.B."/>
            <person name="Brenner S.E."/>
            <person name="Batalov S."/>
            <person name="Forrest A.R."/>
            <person name="Zavolan M."/>
            <person name="Davis M.J."/>
            <person name="Wilming L.G."/>
            <person name="Aidinis V."/>
            <person name="Allen J.E."/>
            <person name="Ambesi-Impiombato A."/>
            <person name="Apweiler R."/>
            <person name="Aturaliya R.N."/>
            <person name="Bailey T.L."/>
            <person name="Bansal M."/>
            <person name="Baxter L."/>
            <person name="Beisel K.W."/>
            <person name="Bersano T."/>
            <person name="Bono H."/>
            <person name="Chalk A.M."/>
            <person name="Chiu K.P."/>
            <person name="Choudhary V."/>
            <person name="Christoffels A."/>
            <person name="Clutterbuck D.R."/>
            <person name="Crowe M.L."/>
            <person name="Dalla E."/>
            <person name="Dalrymple B.P."/>
            <person name="de Bono B."/>
            <person name="Della Gatta G."/>
            <person name="di Bernardo D."/>
            <person name="Down T."/>
            <person name="Engstrom P."/>
            <person name="Fagiolini M."/>
            <person name="Faulkner G."/>
            <person name="Fletcher C.F."/>
            <person name="Fukushima T."/>
            <person name="Furuno M."/>
            <person name="Futaki S."/>
            <person name="Gariboldi M."/>
            <person name="Georgii-Hemming P."/>
            <person name="Gingeras T.R."/>
            <person name="Gojobori T."/>
            <person name="Green R.E."/>
            <person name="Gustincich S."/>
            <person name="Harbers M."/>
            <person name="Hayashi Y."/>
            <person name="Hensch T.K."/>
            <person name="Hirokawa N."/>
            <person name="Hill D."/>
            <person name="Huminiecki L."/>
            <person name="Iacono M."/>
            <person name="Ikeo K."/>
            <person name="Iwama A."/>
            <person name="Ishikawa T."/>
            <person name="Jakt M."/>
            <person name="Kanapin A."/>
            <person name="Katoh M."/>
            <person name="Kawasawa Y."/>
            <person name="Kelso J."/>
            <person name="Kitamura H."/>
            <person name="Kitano H."/>
            <person name="Kollias G."/>
            <person name="Krishnan S.P."/>
            <person name="Kruger A."/>
            <person name="Kummerfeld S.K."/>
            <person name="Kurochkin I.V."/>
            <person name="Lareau L.F."/>
            <person name="Lazarevic D."/>
            <person name="Lipovich L."/>
            <person name="Liu J."/>
            <person name="Liuni S."/>
            <person name="McWilliam S."/>
            <person name="Madan Babu M."/>
            <person name="Madera M."/>
            <person name="Marchionni L."/>
            <person name="Matsuda H."/>
            <person name="Matsuzawa S."/>
            <person name="Miki H."/>
            <person name="Mignone F."/>
            <person name="Miyake S."/>
            <person name="Morris K."/>
            <person name="Mottagui-Tabar S."/>
            <person name="Mulder N."/>
            <person name="Nakano N."/>
            <person name="Nakauchi H."/>
            <person name="Ng P."/>
            <person name="Nilsson R."/>
            <person name="Nishiguchi S."/>
            <person name="Nishikawa S."/>
            <person name="Nori F."/>
            <person name="Ohara O."/>
            <person name="Okazaki Y."/>
            <person name="Orlando V."/>
            <person name="Pang K.C."/>
            <person name="Pavan W.J."/>
            <person name="Pavesi G."/>
            <person name="Pesole G."/>
            <person name="Petrovsky N."/>
            <person name="Piazza S."/>
            <person name="Reed J."/>
            <person name="Reid J.F."/>
            <person name="Ring B.Z."/>
            <person name="Ringwald M."/>
            <person name="Rost B."/>
            <person name="Ruan Y."/>
            <person name="Salzberg S.L."/>
            <person name="Sandelin A."/>
            <person name="Schneider C."/>
            <person name="Schoenbach C."/>
            <person name="Sekiguchi K."/>
            <person name="Semple C.A."/>
            <person name="Seno S."/>
            <person name="Sessa L."/>
            <person name="Sheng Y."/>
            <person name="Shibata Y."/>
            <person name="Shimada H."/>
            <person name="Shimada K."/>
            <person name="Silva D."/>
            <person name="Sinclair B."/>
            <person name="Sperling S."/>
            <person name="Stupka E."/>
            <person name="Sugiura K."/>
            <person name="Sultana R."/>
            <person name="Takenaka Y."/>
            <person name="Taki K."/>
            <person name="Tammoja K."/>
            <person name="Tan S.L."/>
            <person name="Tang S."/>
            <person name="Taylor M.S."/>
            <person name="Tegner J."/>
            <person name="Teichmann S.A."/>
            <person name="Ueda H.R."/>
            <person name="van Nimwegen E."/>
            <person name="Verardo R."/>
            <person name="Wei C.L."/>
            <person name="Yagi K."/>
            <person name="Yamanishi H."/>
            <person name="Zabarovsky E."/>
            <person name="Zhu S."/>
            <person name="Zimmer A."/>
            <person name="Hide W."/>
            <person name="Bult C."/>
            <person name="Grimmond S.M."/>
            <person name="Teasdale R.D."/>
            <person name="Liu E.T."/>
            <person name="Brusic V."/>
            <person name="Quackenbush J."/>
            <person name="Wahlestedt C."/>
            <person name="Mattick J.S."/>
            <person name="Hume D.A."/>
            <person name="Kai C."/>
            <person name="Sasaki D."/>
            <person name="Tomaru Y."/>
            <person name="Fukuda S."/>
            <person name="Kanamori-Katayama M."/>
            <person name="Suzuki M."/>
            <person name="Aoki J."/>
            <person name="Arakawa T."/>
            <person name="Iida J."/>
            <person name="Imamura K."/>
            <person name="Itoh M."/>
            <person name="Kato T."/>
            <person name="Kawaji H."/>
            <person name="Kawagashira N."/>
            <person name="Kawashima T."/>
            <person name="Kojima M."/>
            <person name="Kondo S."/>
            <person name="Konno H."/>
            <person name="Nakano K."/>
            <person name="Ninomiya N."/>
            <person name="Nishio T."/>
            <person name="Okada M."/>
            <person name="Plessy C."/>
            <person name="Shibata K."/>
            <person name="Shiraki T."/>
            <person name="Suzuki S."/>
            <person name="Tagami M."/>
            <person name="Waki K."/>
            <person name="Watahiki A."/>
            <person name="Okamura-Oho Y."/>
            <person name="Suzuki H."/>
            <person name="Kawai J."/>
            <person name="Hayashizaki Y."/>
        </authorList>
    </citation>
    <scope>NUCLEOTIDE SEQUENCE [LARGE SCALE MRNA] (ISOFORM 6)</scope>
    <source>
        <tissue>Mammary gland</tissue>
    </source>
</reference>
<reference key="4">
    <citation type="journal article" date="2009" name="PLoS Biol.">
        <title>Lineage-specific biology revealed by a finished genome assembly of the mouse.</title>
        <authorList>
            <person name="Church D.M."/>
            <person name="Goodstadt L."/>
            <person name="Hillier L.W."/>
            <person name="Zody M.C."/>
            <person name="Goldstein S."/>
            <person name="She X."/>
            <person name="Bult C.J."/>
            <person name="Agarwala R."/>
            <person name="Cherry J.L."/>
            <person name="DiCuccio M."/>
            <person name="Hlavina W."/>
            <person name="Kapustin Y."/>
            <person name="Meric P."/>
            <person name="Maglott D."/>
            <person name="Birtle Z."/>
            <person name="Marques A.C."/>
            <person name="Graves T."/>
            <person name="Zhou S."/>
            <person name="Teague B."/>
            <person name="Potamousis K."/>
            <person name="Churas C."/>
            <person name="Place M."/>
            <person name="Herschleb J."/>
            <person name="Runnheim R."/>
            <person name="Forrest D."/>
            <person name="Amos-Landgraf J."/>
            <person name="Schwartz D.C."/>
            <person name="Cheng Z."/>
            <person name="Lindblad-Toh K."/>
            <person name="Eichler E.E."/>
            <person name="Ponting C.P."/>
        </authorList>
    </citation>
    <scope>NUCLEOTIDE SEQUENCE [LARGE SCALE GENOMIC DNA]</scope>
    <source>
        <strain>C57BL/6J</strain>
    </source>
</reference>
<reference key="5">
    <citation type="journal article" date="2004" name="Genome Res.">
        <title>The status, quality, and expansion of the NIH full-length cDNA project: the Mammalian Gene Collection (MGC).</title>
        <authorList>
            <consortium name="The MGC Project Team"/>
        </authorList>
    </citation>
    <scope>NUCLEOTIDE SEQUENCE [LARGE SCALE MRNA] (ISOFORM 1)</scope>
    <source>
        <strain>C57BL/6J</strain>
        <tissue>Brain</tissue>
        <tissue>Egg</tissue>
    </source>
</reference>
<reference key="6">
    <citation type="journal article" date="1998" name="Proc. Natl. Acad. Sci. U.S.A.">
        <title>Telomere length regulation in mice is linked to a novel chromosome locus.</title>
        <authorList>
            <person name="Zhu L."/>
            <person name="Hathcock K.S."/>
            <person name="Hande P."/>
            <person name="Lansdorp P.M."/>
            <person name="Seldin M.F."/>
            <person name="Hodes R.J."/>
        </authorList>
    </citation>
    <scope>IDENTIFICATION</scope>
</reference>
<reference key="7">
    <citation type="journal article" date="2007" name="Genesis">
        <title>Establishment of conditional knockout alleles for the gene encoding the regulator of telomere length (RTEL).</title>
        <authorList>
            <person name="Wu X."/>
            <person name="Sandhu S."/>
            <person name="Ding H."/>
        </authorList>
    </citation>
    <scope>DISRUPTION PHENOTYPE</scope>
</reference>
<reference key="8">
    <citation type="journal article" date="2012" name="Cell">
        <title>RTEL1 dismantles T loops and counteracts telomeric G4-DNA to maintain telomere integrity.</title>
        <authorList>
            <person name="Vannier J.B."/>
            <person name="Pavicic-Kaltenbrunner V."/>
            <person name="Petalcorin M.I."/>
            <person name="Ding H."/>
            <person name="Boulton S.J."/>
        </authorList>
    </citation>
    <scope>FUNCTION IN TELOMERE INTEGRITY MAINTENANCE</scope>
</reference>
<reference key="9">
    <citation type="journal article" date="2012" name="Mol. Biol. Cell">
        <title>RTEL1 contributes to DNA replication and repair and telomere maintenance.</title>
        <authorList>
            <person name="Uringa E.J."/>
            <person name="Lisaingo K."/>
            <person name="Pickett H.A."/>
            <person name="Brind'Amour J."/>
            <person name="Rohde J.H."/>
            <person name="Zelensky A."/>
            <person name="Essers J."/>
            <person name="Lansdorp P.M."/>
        </authorList>
    </citation>
    <scope>FUNCTION</scope>
</reference>
<reference key="10">
    <citation type="journal article" date="2013" name="Science">
        <title>RTEL1 is a replisome-associated helicase that promotes telomere and genome-wide replication.</title>
        <authorList>
            <person name="Vannier J.B."/>
            <person name="Sandhu S."/>
            <person name="Petalcorin M.I."/>
            <person name="Wu X."/>
            <person name="Nabi Z."/>
            <person name="Ding H."/>
            <person name="Boulton S.J."/>
        </authorList>
    </citation>
    <scope>FUNCTION</scope>
    <scope>INTERACTION WITH PCNA</scope>
    <scope>SUBCELLULAR LOCATION</scope>
    <scope>DOMAIN</scope>
    <scope>MUTAGENESIS OF LYS-48; GLN-1160; ILE-1163; PHE-1166 AND PHE-1167</scope>
</reference>
<keyword id="KW-0004">4Fe-4S</keyword>
<keyword id="KW-0025">Alternative splicing</keyword>
<keyword id="KW-0067">ATP-binding</keyword>
<keyword id="KW-0227">DNA damage</keyword>
<keyword id="KW-0234">DNA repair</keyword>
<keyword id="KW-0238">DNA-binding</keyword>
<keyword id="KW-0347">Helicase</keyword>
<keyword id="KW-0378">Hydrolase</keyword>
<keyword id="KW-0408">Iron</keyword>
<keyword id="KW-0411">Iron-sulfur</keyword>
<keyword id="KW-0413">Isomerase</keyword>
<keyword id="KW-0479">Metal-binding</keyword>
<keyword id="KW-0547">Nucleotide-binding</keyword>
<keyword id="KW-0539">Nucleus</keyword>
<keyword id="KW-1185">Reference proteome</keyword>
<evidence type="ECO:0000255" key="1">
    <source>
        <dbReference type="HAMAP-Rule" id="MF_03065"/>
    </source>
</evidence>
<evidence type="ECO:0000256" key="2">
    <source>
        <dbReference type="SAM" id="MobiDB-lite"/>
    </source>
</evidence>
<evidence type="ECO:0000269" key="3">
    <source>
    </source>
</evidence>
<evidence type="ECO:0000269" key="4">
    <source>
    </source>
</evidence>
<evidence type="ECO:0000269" key="5">
    <source>
    </source>
</evidence>
<evidence type="ECO:0000269" key="6">
    <source>
    </source>
</evidence>
<evidence type="ECO:0000269" key="7">
    <source>
    </source>
</evidence>
<evidence type="ECO:0000303" key="8">
    <source>
    </source>
</evidence>
<evidence type="ECO:0000303" key="9">
    <source>
    </source>
</evidence>
<evidence type="ECO:0000303" key="10">
    <source>
    </source>
</evidence>
<evidence type="ECO:0000303" key="11">
    <source>
    </source>
</evidence>
<evidence type="ECO:0000305" key="12"/>
<accession>Q0VGM9</accession>
<accession>A2AU09</accession>
<accession>A2AU10</accession>
<accession>A2AU11</accession>
<accession>A2AU12</accession>
<accession>A2AU13</accession>
<accession>A2AU14</accession>
<accession>Q3UM40</accession>
<accession>Q5F0J8</accession>
<accession>Q69ZS1</accession>
<accession>Q6H1L0</accession>
<accession>Q6H1L1</accession>
<accession>Q6H1L2</accession>
<accession>Q6H1L3</accession>
<sequence>MPRVVLNGVTVDFPFQPYPCQQEYMTKVLECLQKKVNGILESPTGTGKTLCLLCSTLAWQQHLRDAVSSLKIAERVQGELFASRTLSSWGSAAAASGDSIECYTDIPKIIYASRTHSQLTQVIRELRNTAYRPKVCVLGSREQLCIHPEVKKQESNHMQISLCRKKVASRSCHFYNNVEAKFLEQDLATPILDIEDLVKNGSKQKMCPYYLSRNMKQQADIIFMPYNYLLDAKSRKAHSIDLKGTVVIFDEAHNVEKICEESASFDLTPRDVASGLEIINQVLEEQARVTQQGELQQEFIVDTSSSGLNMELEDIAKLKMILLRLEEAIDAVQLPGDDRGVTKPGSYIFELFAEAQITFQTKGCILESLDQIIQHLAGRTGVFTNTAGLQKLMDIIQIVFSVDPPEGSPGSLVGLGISHSYKVHIHPETSHRRAAKRSDAWSTTASRKQGKVLSYWCFSPSQSMRELVCQGVRTLILTSGTLAPLSSFALEMQIPFPVCLENPHIIDKNQLWVGIVPRGPDGVQLSSAYDKRFSEECLSSLGKALSNIARVVPHGLLVFFPSYPVMEKSLEFWQVQGLARKVEALKPLFVEPRNKGSFSEVIDAYYQQVASPASNGATFLAVCRGKASEGLDFSDMNGRGVIVTGLPYPPRMDPRVVLKMQFLDEMRGRSGVGGQCLSGQEWYQQQASRAVNQAIGRVIRHRHDYGAIFLCDHRFAYADARAQLPSWVRPYLKVYDNFGHVIRDVAQFFRVAQKTMPLPVPQAVTSSVSEGEIALKDATLSSYSLSTRKAMSLDVHVPSLRQKPIGLPAAGDSESSLCGEYEQQTFSAQQRPMGLLAALEYNEQKAGASEEQALGSSTPSLRCEKRLSTEQKGGRKKVRLVNHPEEPMAGTQAGRAKMFMVAVKQALSQANFDTFTQALQHYKSSDDFEALVASLTCLFAEDPKKHTLLKGFYQFVRPHHKQQFEDICFQLTGQRCGYQPGKRELESKLTLSEGVDRQLDPGQHLNQGQPHLSAHPTSKGHTSHCTKVGCAVEKPGQPAVSDYLSDVHKALGSASCNQLTAALRAYKQDDDLDKVVAVVAALTTAKPEHLPLLQRFGMFVRRHHKPQFLQTCADLMGLPTTGKDLELEGPRDESPTVPPELTHEDLKPGPSMSKKPEKTQSKISSFFRQRPDESVRSDDTTPKPMQLPPRLPHELMKPHRSKQ</sequence>
<dbReference type="EC" id="5.6.2.-" evidence="1"/>
<dbReference type="EMBL" id="AY481619">
    <property type="protein sequence ID" value="AAR27234.1"/>
    <property type="molecule type" value="mRNA"/>
</dbReference>
<dbReference type="EMBL" id="AY481620">
    <property type="protein sequence ID" value="AAR27235.1"/>
    <property type="molecule type" value="mRNA"/>
</dbReference>
<dbReference type="EMBL" id="AY481621">
    <property type="protein sequence ID" value="AAR27236.1"/>
    <property type="molecule type" value="mRNA"/>
</dbReference>
<dbReference type="EMBL" id="AY481622">
    <property type="protein sequence ID" value="AAR27237.1"/>
    <property type="molecule type" value="mRNA"/>
</dbReference>
<dbReference type="EMBL" id="AY481623">
    <property type="protein sequence ID" value="AAR27238.1"/>
    <property type="molecule type" value="mRNA"/>
</dbReference>
<dbReference type="EMBL" id="AK173097">
    <property type="protein sequence ID" value="BAD32375.1"/>
    <property type="status" value="ALT_INIT"/>
    <property type="molecule type" value="mRNA"/>
</dbReference>
<dbReference type="EMBL" id="AK145145">
    <property type="protein sequence ID" value="BAE26258.1"/>
    <property type="molecule type" value="mRNA"/>
</dbReference>
<dbReference type="EMBL" id="AL928965">
    <property type="protein sequence ID" value="CAM26413.1"/>
    <property type="molecule type" value="Genomic_DNA"/>
</dbReference>
<dbReference type="EMBL" id="AL928965">
    <property type="protein sequence ID" value="CAM26414.1"/>
    <property type="molecule type" value="Genomic_DNA"/>
</dbReference>
<dbReference type="EMBL" id="AL928965">
    <property type="protein sequence ID" value="CAM26415.1"/>
    <property type="molecule type" value="Genomic_DNA"/>
</dbReference>
<dbReference type="EMBL" id="AL928965">
    <property type="protein sequence ID" value="CAM26416.1"/>
    <property type="molecule type" value="Genomic_DNA"/>
</dbReference>
<dbReference type="EMBL" id="AL928965">
    <property type="protein sequence ID" value="CAM26417.1"/>
    <property type="molecule type" value="Genomic_DNA"/>
</dbReference>
<dbReference type="EMBL" id="AL928965">
    <property type="protein sequence ID" value="CAM26418.1"/>
    <property type="status" value="ALT_SEQ"/>
    <property type="molecule type" value="Genomic_DNA"/>
</dbReference>
<dbReference type="EMBL" id="BC105578">
    <property type="protein sequence ID" value="AAI05579.1"/>
    <property type="molecule type" value="mRNA"/>
</dbReference>
<dbReference type="EMBL" id="BC144977">
    <property type="protein sequence ID" value="AAI44978.1"/>
    <property type="molecule type" value="mRNA"/>
</dbReference>
<dbReference type="EMBL" id="BC144978">
    <property type="protein sequence ID" value="AAI44979.1"/>
    <property type="molecule type" value="mRNA"/>
</dbReference>
<dbReference type="EMBL" id="BC145658">
    <property type="protein sequence ID" value="AAI45659.1"/>
    <property type="molecule type" value="mRNA"/>
</dbReference>
<dbReference type="CCDS" id="CCDS17208.1">
    <molecule id="Q0VGM9-2"/>
</dbReference>
<dbReference type="CCDS" id="CCDS50849.1">
    <molecule id="Q0VGM9-1"/>
</dbReference>
<dbReference type="CCDS" id="CCDS50850.1">
    <molecule id="Q0VGM9-4"/>
</dbReference>
<dbReference type="CCDS" id="CCDS50851.1">
    <molecule id="Q0VGM9-3"/>
</dbReference>
<dbReference type="CCDS" id="CCDS50852.1">
    <molecule id="Q0VGM9-5"/>
</dbReference>
<dbReference type="RefSeq" id="NP_001001882.3">
    <molecule id="Q0VGM9-2"/>
    <property type="nucleotide sequence ID" value="NM_001001882.4"/>
</dbReference>
<dbReference type="RefSeq" id="NP_001160137.1">
    <molecule id="Q0VGM9-1"/>
    <property type="nucleotide sequence ID" value="NM_001166665.2"/>
</dbReference>
<dbReference type="RefSeq" id="NP_001160138.1">
    <molecule id="Q0VGM9-3"/>
    <property type="nucleotide sequence ID" value="NM_001166666.2"/>
</dbReference>
<dbReference type="RefSeq" id="NP_001160139.1">
    <molecule id="Q0VGM9-5"/>
    <property type="nucleotide sequence ID" value="NM_001166667.2"/>
</dbReference>
<dbReference type="RefSeq" id="NP_001160140.1">
    <molecule id="Q0VGM9-4"/>
    <property type="nucleotide sequence ID" value="NM_001166668.2"/>
</dbReference>
<dbReference type="SMR" id="Q0VGM9"/>
<dbReference type="FunCoup" id="Q0VGM9">
    <property type="interactions" value="2536"/>
</dbReference>
<dbReference type="STRING" id="10090.ENSMUSP00000053120"/>
<dbReference type="iPTMnet" id="Q0VGM9"/>
<dbReference type="PhosphoSitePlus" id="Q0VGM9"/>
<dbReference type="jPOST" id="Q0VGM9"/>
<dbReference type="PaxDb" id="10090-ENSMUSP00000053120"/>
<dbReference type="ProteomicsDB" id="260945">
    <molecule id="Q0VGM9-1"/>
</dbReference>
<dbReference type="ProteomicsDB" id="260946">
    <molecule id="Q0VGM9-2"/>
</dbReference>
<dbReference type="ProteomicsDB" id="260947">
    <molecule id="Q0VGM9-3"/>
</dbReference>
<dbReference type="ProteomicsDB" id="260948">
    <molecule id="Q0VGM9-4"/>
</dbReference>
<dbReference type="ProteomicsDB" id="260949">
    <molecule id="Q0VGM9-5"/>
</dbReference>
<dbReference type="ProteomicsDB" id="260950">
    <molecule id="Q0VGM9-6"/>
</dbReference>
<dbReference type="DNASU" id="269400"/>
<dbReference type="Ensembl" id="ENSMUST00000048608.16">
    <molecule id="Q0VGM9-4"/>
    <property type="protein sequence ID" value="ENSMUSP00000043563.10"/>
    <property type="gene ID" value="ENSMUSG00000038685.19"/>
</dbReference>
<dbReference type="Ensembl" id="ENSMUST00000054622.15">
    <molecule id="Q0VGM9-2"/>
    <property type="protein sequence ID" value="ENSMUSP00000053120.9"/>
    <property type="gene ID" value="ENSMUSG00000038685.19"/>
</dbReference>
<dbReference type="Ensembl" id="ENSMUST00000098971.11">
    <molecule id="Q0VGM9-3"/>
    <property type="protein sequence ID" value="ENSMUSP00000096571.5"/>
    <property type="gene ID" value="ENSMUSG00000038685.19"/>
</dbReference>
<dbReference type="Ensembl" id="ENSMUST00000108814.8">
    <molecule id="Q0VGM9-1"/>
    <property type="protein sequence ID" value="ENSMUSP00000104442.2"/>
    <property type="gene ID" value="ENSMUSG00000038685.19"/>
</dbReference>
<dbReference type="Ensembl" id="ENSMUST00000108815.8">
    <molecule id="Q0VGM9-5"/>
    <property type="protein sequence ID" value="ENSMUSP00000104443.2"/>
    <property type="gene ID" value="ENSMUSG00000038685.19"/>
</dbReference>
<dbReference type="GeneID" id="269400"/>
<dbReference type="KEGG" id="mmu:269400"/>
<dbReference type="UCSC" id="uc008olu.2">
    <molecule id="Q0VGM9-6"/>
    <property type="organism name" value="mouse"/>
</dbReference>
<dbReference type="UCSC" id="uc008olv.2">
    <molecule id="Q0VGM9-2"/>
    <property type="organism name" value="mouse"/>
</dbReference>
<dbReference type="UCSC" id="uc008olw.2">
    <molecule id="Q0VGM9-1"/>
    <property type="organism name" value="mouse"/>
</dbReference>
<dbReference type="UCSC" id="uc008olx.2">
    <molecule id="Q0VGM9-3"/>
    <property type="organism name" value="mouse"/>
</dbReference>
<dbReference type="UCSC" id="uc012cmk.1">
    <molecule id="Q0VGM9-5"/>
    <property type="organism name" value="mouse"/>
</dbReference>
<dbReference type="UCSC" id="uc012cml.1">
    <molecule id="Q0VGM9-4"/>
    <property type="organism name" value="mouse"/>
</dbReference>
<dbReference type="AGR" id="MGI:2139369"/>
<dbReference type="CTD" id="51750"/>
<dbReference type="MGI" id="MGI:2139369">
    <property type="gene designation" value="Rtel1"/>
</dbReference>
<dbReference type="VEuPathDB" id="HostDB:ENSMUSG00000038685"/>
<dbReference type="eggNOG" id="KOG1132">
    <property type="taxonomic scope" value="Eukaryota"/>
</dbReference>
<dbReference type="GeneTree" id="ENSGT00950000182970"/>
<dbReference type="HOGENOM" id="CLU_006515_4_0_1"/>
<dbReference type="InParanoid" id="Q0VGM9"/>
<dbReference type="OMA" id="EDPNTHS"/>
<dbReference type="TreeFam" id="TF317291"/>
<dbReference type="Reactome" id="R-MMU-171319">
    <property type="pathway name" value="Telomere Extension By Telomerase"/>
</dbReference>
<dbReference type="BioGRID-ORCS" id="269400">
    <property type="hits" value="34 hits in 117 CRISPR screens"/>
</dbReference>
<dbReference type="ChiTaRS" id="Rtel1">
    <property type="organism name" value="mouse"/>
</dbReference>
<dbReference type="PRO" id="PR:Q0VGM9"/>
<dbReference type="Proteomes" id="UP000000589">
    <property type="component" value="Chromosome 2"/>
</dbReference>
<dbReference type="RNAct" id="Q0VGM9">
    <property type="molecule type" value="protein"/>
</dbReference>
<dbReference type="Bgee" id="ENSMUSG00000038685">
    <property type="expression patterns" value="Expressed in spermatocyte and 236 other cell types or tissues"/>
</dbReference>
<dbReference type="ExpressionAtlas" id="Q0VGM9">
    <property type="expression patterns" value="baseline and differential"/>
</dbReference>
<dbReference type="GO" id="GO:0000781">
    <property type="term" value="C:chromosome, telomeric region"/>
    <property type="evidence" value="ECO:0000314"/>
    <property type="project" value="BHF-UCL"/>
</dbReference>
<dbReference type="GO" id="GO:0031965">
    <property type="term" value="C:nuclear membrane"/>
    <property type="evidence" value="ECO:0007669"/>
    <property type="project" value="Ensembl"/>
</dbReference>
<dbReference type="GO" id="GO:0016607">
    <property type="term" value="C:nuclear speck"/>
    <property type="evidence" value="ECO:0007669"/>
    <property type="project" value="Ensembl"/>
</dbReference>
<dbReference type="GO" id="GO:0005634">
    <property type="term" value="C:nucleus"/>
    <property type="evidence" value="ECO:0000314"/>
    <property type="project" value="MGI"/>
</dbReference>
<dbReference type="GO" id="GO:0051539">
    <property type="term" value="F:4 iron, 4 sulfur cluster binding"/>
    <property type="evidence" value="ECO:0007669"/>
    <property type="project" value="UniProtKB-UniRule"/>
</dbReference>
<dbReference type="GO" id="GO:0005524">
    <property type="term" value="F:ATP binding"/>
    <property type="evidence" value="ECO:0000250"/>
    <property type="project" value="UniProtKB"/>
</dbReference>
<dbReference type="GO" id="GO:0016887">
    <property type="term" value="F:ATP hydrolysis activity"/>
    <property type="evidence" value="ECO:0007669"/>
    <property type="project" value="RHEA"/>
</dbReference>
<dbReference type="GO" id="GO:0003677">
    <property type="term" value="F:DNA binding"/>
    <property type="evidence" value="ECO:0007669"/>
    <property type="project" value="UniProtKB-UniRule"/>
</dbReference>
<dbReference type="GO" id="GO:0003678">
    <property type="term" value="F:DNA helicase activity"/>
    <property type="evidence" value="ECO:0000314"/>
    <property type="project" value="BHF-UCL"/>
</dbReference>
<dbReference type="GO" id="GO:0070182">
    <property type="term" value="F:DNA polymerase binding"/>
    <property type="evidence" value="ECO:0000353"/>
    <property type="project" value="BHF-UCL"/>
</dbReference>
<dbReference type="GO" id="GO:0004386">
    <property type="term" value="F:helicase activity"/>
    <property type="evidence" value="ECO:0000304"/>
    <property type="project" value="BHF-UCL"/>
</dbReference>
<dbReference type="GO" id="GO:0046872">
    <property type="term" value="F:metal ion binding"/>
    <property type="evidence" value="ECO:0007669"/>
    <property type="project" value="UniProtKB-UniRule"/>
</dbReference>
<dbReference type="GO" id="GO:0006281">
    <property type="term" value="P:DNA repair"/>
    <property type="evidence" value="ECO:0007669"/>
    <property type="project" value="UniProtKB-UniRule"/>
</dbReference>
<dbReference type="GO" id="GO:0000732">
    <property type="term" value="P:DNA strand displacement"/>
    <property type="evidence" value="ECO:0000314"/>
    <property type="project" value="BHF-UCL"/>
</dbReference>
<dbReference type="GO" id="GO:1902990">
    <property type="term" value="P:mitotic telomere maintenance via semi-conservative replication"/>
    <property type="evidence" value="ECO:0000314"/>
    <property type="project" value="BHF-UCL"/>
</dbReference>
<dbReference type="GO" id="GO:0045910">
    <property type="term" value="P:negative regulation of DNA recombination"/>
    <property type="evidence" value="ECO:0000314"/>
    <property type="project" value="BHF-UCL"/>
</dbReference>
<dbReference type="GO" id="GO:1904430">
    <property type="term" value="P:negative regulation of t-circle formation"/>
    <property type="evidence" value="ECO:0000315"/>
    <property type="project" value="BHF-UCL"/>
</dbReference>
<dbReference type="GO" id="GO:1904506">
    <property type="term" value="P:negative regulation of telomere maintenance in response to DNA damage"/>
    <property type="evidence" value="ECO:0000315"/>
    <property type="project" value="BHF-UCL"/>
</dbReference>
<dbReference type="GO" id="GO:1904355">
    <property type="term" value="P:positive regulation of telomere capping"/>
    <property type="evidence" value="ECO:0007669"/>
    <property type="project" value="Ensembl"/>
</dbReference>
<dbReference type="GO" id="GO:0032206">
    <property type="term" value="P:positive regulation of telomere maintenance"/>
    <property type="evidence" value="ECO:0000315"/>
    <property type="project" value="BHF-UCL"/>
</dbReference>
<dbReference type="GO" id="GO:1904358">
    <property type="term" value="P:positive regulation of telomere maintenance via telomere lengthening"/>
    <property type="evidence" value="ECO:0007669"/>
    <property type="project" value="Ensembl"/>
</dbReference>
<dbReference type="GO" id="GO:1904535">
    <property type="term" value="P:positive regulation of telomeric loop disassembly"/>
    <property type="evidence" value="ECO:0000314"/>
    <property type="project" value="BHF-UCL"/>
</dbReference>
<dbReference type="GO" id="GO:0010569">
    <property type="term" value="P:regulation of double-strand break repair via homologous recombination"/>
    <property type="evidence" value="ECO:0000250"/>
    <property type="project" value="UniProtKB"/>
</dbReference>
<dbReference type="GO" id="GO:0031297">
    <property type="term" value="P:replication fork processing"/>
    <property type="evidence" value="ECO:0000314"/>
    <property type="project" value="BHF-UCL"/>
</dbReference>
<dbReference type="GO" id="GO:0000723">
    <property type="term" value="P:telomere maintenance"/>
    <property type="evidence" value="ECO:0000315"/>
    <property type="project" value="MGI"/>
</dbReference>
<dbReference type="GO" id="GO:0043247">
    <property type="term" value="P:telomere maintenance in response to DNA damage"/>
    <property type="evidence" value="ECO:0000315"/>
    <property type="project" value="BHF-UCL"/>
</dbReference>
<dbReference type="GO" id="GO:0061820">
    <property type="term" value="P:telomeric D-loop disassembly"/>
    <property type="evidence" value="ECO:0000304"/>
    <property type="project" value="BHF-UCL"/>
</dbReference>
<dbReference type="GO" id="GO:0090657">
    <property type="term" value="P:telomeric loop disassembly"/>
    <property type="evidence" value="ECO:0000314"/>
    <property type="project" value="BHF-UCL"/>
</dbReference>
<dbReference type="CDD" id="cd17970">
    <property type="entry name" value="DEAHc_FancJ"/>
    <property type="match status" value="1"/>
</dbReference>
<dbReference type="CDD" id="cd13932">
    <property type="entry name" value="HN_RTEL1"/>
    <property type="match status" value="2"/>
</dbReference>
<dbReference type="CDD" id="cd18788">
    <property type="entry name" value="SF2_C_XPD"/>
    <property type="match status" value="1"/>
</dbReference>
<dbReference type="FunFam" id="1.20.1160.20:FF:000006">
    <property type="entry name" value="Regulator of telomere elongation helicase 1"/>
    <property type="match status" value="1"/>
</dbReference>
<dbReference type="FunFam" id="1.20.1160.20:FF:000009">
    <property type="entry name" value="Regulator of telomere elongation helicase 1"/>
    <property type="match status" value="1"/>
</dbReference>
<dbReference type="FunFam" id="3.40.50.300:FF:000431">
    <property type="entry name" value="Regulator of telomere elongation helicase 1"/>
    <property type="match status" value="1"/>
</dbReference>
<dbReference type="FunFam" id="3.40.50.300:FF:000691">
    <property type="entry name" value="Regulator of telomere elongation helicase 1"/>
    <property type="match status" value="1"/>
</dbReference>
<dbReference type="Gene3D" id="1.20.1160.20">
    <property type="match status" value="2"/>
</dbReference>
<dbReference type="Gene3D" id="3.40.50.300">
    <property type="entry name" value="P-loop containing nucleotide triphosphate hydrolases"/>
    <property type="match status" value="2"/>
</dbReference>
<dbReference type="HAMAP" id="MF_03065">
    <property type="entry name" value="RTEL1"/>
    <property type="match status" value="1"/>
</dbReference>
<dbReference type="InterPro" id="IPR006555">
    <property type="entry name" value="ATP-dep_Helicase_C"/>
</dbReference>
<dbReference type="InterPro" id="IPR045028">
    <property type="entry name" value="DinG/Rad3-like"/>
</dbReference>
<dbReference type="InterPro" id="IPR014013">
    <property type="entry name" value="Helic_SF1/SF2_ATP-bd_DinG/Rad3"/>
</dbReference>
<dbReference type="InterPro" id="IPR006554">
    <property type="entry name" value="Helicase-like_DEXD_c2"/>
</dbReference>
<dbReference type="InterPro" id="IPR049909">
    <property type="entry name" value="HHD_RTEL1"/>
</dbReference>
<dbReference type="InterPro" id="IPR027417">
    <property type="entry name" value="P-loop_NTPase"/>
</dbReference>
<dbReference type="InterPro" id="IPR010614">
    <property type="entry name" value="RAD3-like_helicase_DEAD"/>
</dbReference>
<dbReference type="InterPro" id="IPR013020">
    <property type="entry name" value="Rad3/Chl1-like"/>
</dbReference>
<dbReference type="InterPro" id="IPR030845">
    <property type="entry name" value="RTEL1"/>
</dbReference>
<dbReference type="NCBIfam" id="TIGR00604">
    <property type="entry name" value="rad3"/>
    <property type="match status" value="1"/>
</dbReference>
<dbReference type="PANTHER" id="PTHR11472">
    <property type="entry name" value="DNA REPAIR DEAD HELICASE RAD3/XP-D SUBFAMILY MEMBER"/>
    <property type="match status" value="1"/>
</dbReference>
<dbReference type="PANTHER" id="PTHR11472:SF34">
    <property type="entry name" value="REGULATOR OF TELOMERE ELONGATION HELICASE 1"/>
    <property type="match status" value="1"/>
</dbReference>
<dbReference type="Pfam" id="PF23109">
    <property type="entry name" value="ARCH_RTEL1"/>
    <property type="match status" value="1"/>
</dbReference>
<dbReference type="Pfam" id="PF06733">
    <property type="entry name" value="DEAD_2"/>
    <property type="match status" value="1"/>
</dbReference>
<dbReference type="Pfam" id="PF13307">
    <property type="entry name" value="Helicase_C_2"/>
    <property type="match status" value="1"/>
</dbReference>
<dbReference type="Pfam" id="PF23116">
    <property type="entry name" value="HHD_RTEL1"/>
    <property type="match status" value="2"/>
</dbReference>
<dbReference type="SMART" id="SM00488">
    <property type="entry name" value="DEXDc2"/>
    <property type="match status" value="1"/>
</dbReference>
<dbReference type="SMART" id="SM00491">
    <property type="entry name" value="HELICc2"/>
    <property type="match status" value="1"/>
</dbReference>
<dbReference type="SUPFAM" id="SSF52540">
    <property type="entry name" value="P-loop containing nucleoside triphosphate hydrolases"/>
    <property type="match status" value="2"/>
</dbReference>
<dbReference type="PROSITE" id="PS51193">
    <property type="entry name" value="HELICASE_ATP_BIND_2"/>
    <property type="match status" value="1"/>
</dbReference>
<gene>
    <name evidence="11" type="primary">Rtel1</name>
    <name type="synonym">Kiaa1088</name>
    <name evidence="8" type="synonym">Rtel</name>
</gene>
<feature type="chain" id="PRO_0000370610" description="Regulator of telomere elongation helicase 1">
    <location>
        <begin position="1"/>
        <end position="1203"/>
    </location>
</feature>
<feature type="domain" description="Helicase ATP-binding" evidence="1">
    <location>
        <begin position="7"/>
        <end position="296"/>
    </location>
</feature>
<feature type="region of interest" description="Disordered" evidence="2">
    <location>
        <begin position="998"/>
        <end position="1020"/>
    </location>
</feature>
<feature type="region of interest" description="Disordered" evidence="2">
    <location>
        <begin position="1120"/>
        <end position="1203"/>
    </location>
</feature>
<feature type="short sequence motif" description="Nuclear localization signal" evidence="1">
    <location>
        <begin position="151"/>
        <end position="167"/>
    </location>
</feature>
<feature type="short sequence motif" description="DEAH box">
    <location>
        <begin position="250"/>
        <end position="253"/>
    </location>
</feature>
<feature type="short sequence motif" description="Nuclear localization signal" evidence="1">
    <location>
        <begin position="871"/>
        <end position="877"/>
    </location>
</feature>
<feature type="short sequence motif" description="PIP-box">
    <location>
        <begin position="1160"/>
        <end position="1167"/>
    </location>
</feature>
<feature type="compositionally biased region" description="Polar residues" evidence="2">
    <location>
        <begin position="1004"/>
        <end position="1020"/>
    </location>
</feature>
<feature type="compositionally biased region" description="Basic and acidic residues" evidence="2">
    <location>
        <begin position="1123"/>
        <end position="1134"/>
    </location>
</feature>
<feature type="compositionally biased region" description="Basic and acidic residues" evidence="2">
    <location>
        <begin position="1169"/>
        <end position="1181"/>
    </location>
</feature>
<feature type="binding site" evidence="1">
    <location>
        <begin position="42"/>
        <end position="49"/>
    </location>
    <ligand>
        <name>ATP</name>
        <dbReference type="ChEBI" id="CHEBI:30616"/>
    </ligand>
</feature>
<feature type="binding site" evidence="1">
    <location>
        <position position="145"/>
    </location>
    <ligand>
        <name>[4Fe-4S] cluster</name>
        <dbReference type="ChEBI" id="CHEBI:49883"/>
    </ligand>
</feature>
<feature type="binding site" evidence="1">
    <location>
        <position position="163"/>
    </location>
    <ligand>
        <name>[4Fe-4S] cluster</name>
        <dbReference type="ChEBI" id="CHEBI:49883"/>
    </ligand>
</feature>
<feature type="binding site" evidence="1">
    <location>
        <position position="172"/>
    </location>
    <ligand>
        <name>[4Fe-4S] cluster</name>
        <dbReference type="ChEBI" id="CHEBI:49883"/>
    </ligand>
</feature>
<feature type="binding site" evidence="1">
    <location>
        <position position="207"/>
    </location>
    <ligand>
        <name>[4Fe-4S] cluster</name>
        <dbReference type="ChEBI" id="CHEBI:49883"/>
    </ligand>
</feature>
<feature type="splice variant" id="VSP_036945" description="In isoform 6." evidence="10">
    <original>KVLSYWCFSPSQSMRELVCQGVRTLILTSGTLAPLSSFALEMQIPFPVCLENPHIIDKNQLWVGIVPRGPDGVQLSS</original>
    <variation>TNLHCRKLYLAQPLHNNNITSGVMPTESQRQEALLSTQRHLLGQWQNPGSARPPLPDLGYIIINHYRHYYYYFVFSR</variation>
    <location>
        <begin position="451"/>
        <end position="527"/>
    </location>
</feature>
<feature type="splice variant" id="VSP_036946" description="In isoform 6." evidence="10">
    <location>
        <begin position="528"/>
        <end position="1203"/>
    </location>
</feature>
<feature type="splice variant" id="VSP_036947" description="In isoform 3." evidence="8">
    <original>GKRELESKLTLSEGVDRQLDPGQHLNQGQPHLSAHPTSK</original>
    <variation>AHFSKP</variation>
    <location>
        <begin position="981"/>
        <end position="1019"/>
    </location>
</feature>
<feature type="splice variant" id="VSP_036948" description="In isoform 5." evidence="8">
    <location>
        <begin position="981"/>
        <end position="1019"/>
    </location>
</feature>
<feature type="splice variant" id="VSP_036949" description="In isoform 2." evidence="8 9">
    <original>K</original>
    <variation>KAHFSKP</variation>
    <location>
        <position position="1019"/>
    </location>
</feature>
<feature type="splice variant" id="VSP_036950" description="In isoform 4." evidence="8">
    <location>
        <begin position="1021"/>
        <end position="1095"/>
    </location>
</feature>
<feature type="mutagenesis site" description="Abolishes G4-DNA unwinding activity." evidence="7">
    <original>K</original>
    <variation>R</variation>
    <location>
        <position position="48"/>
    </location>
</feature>
<feature type="mutagenesis site" description="Abolishes interaction with PCNA." evidence="7">
    <original>Q</original>
    <variation>A</variation>
    <location>
        <position position="1160"/>
    </location>
</feature>
<feature type="mutagenesis site" description="Abolishes interaction with PCNA." evidence="7">
    <original>I</original>
    <variation>A</variation>
    <location>
        <position position="1163"/>
    </location>
</feature>
<feature type="mutagenesis site" description="Abolishes interaction with PCNA." evidence="7">
    <original>F</original>
    <variation>A</variation>
    <location>
        <position position="1166"/>
    </location>
</feature>
<feature type="mutagenesis site" description="Abolishes interaction with PCNA." evidence="7">
    <original>F</original>
    <variation>A</variation>
    <location>
        <position position="1167"/>
    </location>
</feature>
<feature type="sequence conflict" description="In Ref. 4; AAI05579." evidence="12" ref="4">
    <original>A</original>
    <variation>T</variation>
    <location>
        <position position="180"/>
    </location>
</feature>
<feature type="sequence conflict" description="In Ref. 1; AAR27234/AAR27235/AAR27236/AAR27237/AAR27238." evidence="12" ref="1">
    <original>G</original>
    <variation>R</variation>
    <location>
        <position position="381"/>
    </location>
</feature>
<feature type="sequence conflict" description="In Ref. 4; AAI05579." evidence="12" ref="4">
    <original>F</original>
    <variation>S</variation>
    <location>
        <position position="383"/>
    </location>
</feature>
<feature type="sequence conflict" description="In Ref. 4; AAI05579." evidence="12" ref="4">
    <original>V</original>
    <variation>A</variation>
    <location>
        <position position="402"/>
    </location>
</feature>
<feature type="sequence conflict" description="In Ref. 1; AAR27234/AAR27235/AAR27236/AAR27237/AAR27238." evidence="12" ref="1">
    <original>G</original>
    <variation>S</variation>
    <location>
        <position position="416"/>
    </location>
</feature>
<feature type="sequence conflict" description="In Ref. 4; AAI05579." evidence="12" ref="4">
    <original>F</original>
    <variation>L</variation>
    <location>
        <position position="619"/>
    </location>
</feature>
<feature type="sequence conflict" description="In Ref. 4; AAI05579." evidence="12" ref="4">
    <original>F</original>
    <variation>S</variation>
    <location>
        <position position="633"/>
    </location>
</feature>
<feature type="sequence conflict" description="In Ref. 4; AAI05579." evidence="12" ref="4">
    <original>H</original>
    <variation>R</variation>
    <location>
        <position position="796"/>
    </location>
</feature>
<comment type="function">
    <text evidence="1 3 5 6 7">A probable ATP-dependent DNA helicase implicated in telomere-length regulation, DNA repair and the maintenance of genomic stability. Acts as an anti-recombinase to counteract toxic recombination and limit crossover during meiosis. Regulates meiotic recombination and crossover homeostasis by physically dissociating strand invasion events and thereby promotes noncrossover repair by meiotic synthesis dependent strand annealing (SDSA) as well as disassembly of D loop recombination intermediates. Also disassembles T loops and prevents telomere fragility by counteracting telomeric G4-DNA structures, which together ensure the dynamics and stability of the telomere (PubMed:22579284).</text>
</comment>
<comment type="catalytic activity">
    <reaction evidence="1">
        <text>ATP + H2O = ADP + phosphate + H(+)</text>
        <dbReference type="Rhea" id="RHEA:13065"/>
        <dbReference type="ChEBI" id="CHEBI:15377"/>
        <dbReference type="ChEBI" id="CHEBI:15378"/>
        <dbReference type="ChEBI" id="CHEBI:30616"/>
        <dbReference type="ChEBI" id="CHEBI:43474"/>
        <dbReference type="ChEBI" id="CHEBI:456216"/>
    </reaction>
</comment>
<comment type="subunit">
    <text evidence="1 7">Interacts with TERF1. Interacts (via PIP-box) with PCNA; the interaction is direct and essential for suppressing telomere fragility (PubMed:24115439). Interacts with MMS19; the interaction mediates the association of RTEL1 with the cytosolic iron-sulfur protein assembly (CIA) complex.</text>
</comment>
<comment type="subcellular location">
    <subcellularLocation>
        <location evidence="1 3 7">Nucleus</location>
    </subcellularLocation>
    <text>Colocalizes with PCNA within the replication foci in S-phase cells.</text>
</comment>
<comment type="alternative products">
    <event type="alternative splicing"/>
    <isoform>
        <id>Q0VGM9-1</id>
        <name>1</name>
        <sequence type="displayed"/>
    </isoform>
    <isoform>
        <id>Q0VGM9-2</id>
        <name>2</name>
        <sequence type="described" ref="VSP_036949"/>
    </isoform>
    <isoform>
        <id>Q0VGM9-3</id>
        <name>3</name>
        <sequence type="described" ref="VSP_036947"/>
    </isoform>
    <isoform>
        <id>Q0VGM9-4</id>
        <name>4</name>
        <sequence type="described" ref="VSP_036950"/>
    </isoform>
    <isoform>
        <id>Q0VGM9-5</id>
        <name>5</name>
        <sequence type="described" ref="VSP_036948"/>
    </isoform>
    <isoform>
        <id>Q0VGM9-6</id>
        <name>6</name>
        <sequence type="described" ref="VSP_036945 VSP_036946"/>
    </isoform>
</comment>
<comment type="tissue specificity">
    <text evidence="3">Widely expressed. Expressed in spleen, thymus, Peyer patches, kidney, and intestine. Not expressed in brain, heart, lung, skeletal muscles, skin and white fat. In the adult gonad, it is highly expressed in the testis, mainly in the spermatogonia and meiotic spermatocytes.</text>
</comment>
<comment type="developmental stage">
    <text>Widely expressed in 8.5 dpc and 9.5 dpc embryos with a more restricted expression pattern at 13.5 dpc-15.5 dpc. In general, expression in embryos coincides with areas of actively proliferating cells.</text>
</comment>
<comment type="domain">
    <text evidence="1 7">The PIP-box (PCNA interacting peptide) motif mediates the interaction with PCNA and localization to replication foci.</text>
</comment>
<comment type="disruption phenotype">
    <text evidence="3 4">Death between days 10 and 11.5 of gestation with defects in the nervous system, heart, vasculature and extraembryonic tissues. Effects are due to severe genome instability and stochastic telomere loss in embryonic stem cells which display many chromosome breaks and fusions upon differentiation in vitro.</text>
</comment>
<comment type="miscellaneous">
    <text>Able to elongate M.spretus telomeres in crosses between M.musculus and M.spretus.</text>
</comment>
<comment type="similarity">
    <text evidence="1">Belongs to the helicase family. RAD3/XPD subfamily.</text>
</comment>
<comment type="sequence caution" evidence="12">
    <conflict type="erroneous initiation">
        <sequence resource="EMBL-CDS" id="BAD32375"/>
    </conflict>
    <text>Extended N-terminus.</text>
</comment>
<comment type="sequence caution" evidence="12">
    <conflict type="erroneous gene model prediction">
        <sequence resource="EMBL-CDS" id="CAM26418"/>
    </conflict>
</comment>
<protein>
    <recommendedName>
        <fullName evidence="1">Regulator of telomere elongation helicase 1</fullName>
        <ecNumber evidence="1">5.6.2.-</ecNumber>
    </recommendedName>
</protein>